<organism>
    <name type="scientific">Moraxella catarrhalis</name>
    <name type="common">Branhamella catarrhalis</name>
    <dbReference type="NCBI Taxonomy" id="480"/>
    <lineage>
        <taxon>Bacteria</taxon>
        <taxon>Pseudomonadati</taxon>
        <taxon>Pseudomonadota</taxon>
        <taxon>Gammaproteobacteria</taxon>
        <taxon>Moraxellales</taxon>
        <taxon>Moraxellaceae</taxon>
        <taxon>Moraxella</taxon>
    </lineage>
</organism>
<feature type="chain" id="PRO_0000072849" description="Glycine--tRNA ligase alpha subunit">
    <location>
        <begin position="1"/>
        <end position="318"/>
    </location>
</feature>
<dbReference type="EC" id="6.1.1.14"/>
<dbReference type="EMBL" id="U73324">
    <property type="protein sequence ID" value="AAB18211.1"/>
    <property type="molecule type" value="Genomic_DNA"/>
</dbReference>
<dbReference type="SMR" id="P77892"/>
<dbReference type="eggNOG" id="COG0752">
    <property type="taxonomic scope" value="Bacteria"/>
</dbReference>
<dbReference type="GO" id="GO:0005829">
    <property type="term" value="C:cytosol"/>
    <property type="evidence" value="ECO:0007669"/>
    <property type="project" value="TreeGrafter"/>
</dbReference>
<dbReference type="GO" id="GO:0005524">
    <property type="term" value="F:ATP binding"/>
    <property type="evidence" value="ECO:0007669"/>
    <property type="project" value="UniProtKB-UniRule"/>
</dbReference>
<dbReference type="GO" id="GO:0004820">
    <property type="term" value="F:glycine-tRNA ligase activity"/>
    <property type="evidence" value="ECO:0007669"/>
    <property type="project" value="UniProtKB-UniRule"/>
</dbReference>
<dbReference type="GO" id="GO:0006426">
    <property type="term" value="P:glycyl-tRNA aminoacylation"/>
    <property type="evidence" value="ECO:0007669"/>
    <property type="project" value="UniProtKB-UniRule"/>
</dbReference>
<dbReference type="CDD" id="cd00733">
    <property type="entry name" value="GlyRS_alpha_core"/>
    <property type="match status" value="1"/>
</dbReference>
<dbReference type="FunFam" id="3.30.930.10:FF:000006">
    <property type="entry name" value="Glycine--tRNA ligase alpha subunit"/>
    <property type="match status" value="1"/>
</dbReference>
<dbReference type="Gene3D" id="3.30.930.10">
    <property type="entry name" value="Bira Bifunctional Protein, Domain 2"/>
    <property type="match status" value="1"/>
</dbReference>
<dbReference type="Gene3D" id="1.20.58.180">
    <property type="entry name" value="Class II aaRS and biotin synthetases, domain 2"/>
    <property type="match status" value="1"/>
</dbReference>
<dbReference type="HAMAP" id="MF_00254">
    <property type="entry name" value="Gly_tRNA_synth_alpha"/>
    <property type="match status" value="1"/>
</dbReference>
<dbReference type="InterPro" id="IPR045864">
    <property type="entry name" value="aa-tRNA-synth_II/BPL/LPL"/>
</dbReference>
<dbReference type="InterPro" id="IPR006194">
    <property type="entry name" value="Gly-tRNA-synth_heterodimer"/>
</dbReference>
<dbReference type="InterPro" id="IPR002310">
    <property type="entry name" value="Gly-tRNA_ligase_asu"/>
</dbReference>
<dbReference type="NCBIfam" id="TIGR00388">
    <property type="entry name" value="glyQ"/>
    <property type="match status" value="1"/>
</dbReference>
<dbReference type="NCBIfam" id="NF006827">
    <property type="entry name" value="PRK09348.1"/>
    <property type="match status" value="1"/>
</dbReference>
<dbReference type="PANTHER" id="PTHR30075:SF2">
    <property type="entry name" value="GLYCINE--TRNA LIGASE, CHLOROPLASTIC_MITOCHONDRIAL 2"/>
    <property type="match status" value="1"/>
</dbReference>
<dbReference type="PANTHER" id="PTHR30075">
    <property type="entry name" value="GLYCYL-TRNA SYNTHETASE"/>
    <property type="match status" value="1"/>
</dbReference>
<dbReference type="Pfam" id="PF02091">
    <property type="entry name" value="tRNA-synt_2e"/>
    <property type="match status" value="1"/>
</dbReference>
<dbReference type="PRINTS" id="PR01044">
    <property type="entry name" value="TRNASYNTHGA"/>
</dbReference>
<dbReference type="SUPFAM" id="SSF55681">
    <property type="entry name" value="Class II aaRS and biotin synthetases"/>
    <property type="match status" value="1"/>
</dbReference>
<dbReference type="PROSITE" id="PS50861">
    <property type="entry name" value="AA_TRNA_LIGASE_II_GLYAB"/>
    <property type="match status" value="1"/>
</dbReference>
<protein>
    <recommendedName>
        <fullName>Glycine--tRNA ligase alpha subunit</fullName>
        <ecNumber>6.1.1.14</ecNumber>
    </recommendedName>
    <alternativeName>
        <fullName>Glycyl-tRNA synthetase alpha subunit</fullName>
        <shortName>GlyRS</shortName>
    </alternativeName>
</protein>
<reference key="1">
    <citation type="submission" date="1996-11" db="EMBL/GenBank/DDBJ databases">
        <authorList>
            <person name="Walker E.S."/>
            <person name="Preston R.A."/>
            <person name="Post J.C."/>
            <person name="Ehrlich G.D."/>
            <person name="Klingman K.L."/>
        </authorList>
    </citation>
    <scope>NUCLEOTIDE SEQUENCE [GENOMIC DNA]</scope>
    <source>
        <strain>ATCC 25238 / DSM 9143 / BCRC 10629 / CCUG 353 / CIP 73.21 / NCTC 11020 / Ne 11</strain>
    </source>
</reference>
<keyword id="KW-0030">Aminoacyl-tRNA synthetase</keyword>
<keyword id="KW-0067">ATP-binding</keyword>
<keyword id="KW-0963">Cytoplasm</keyword>
<keyword id="KW-0436">Ligase</keyword>
<keyword id="KW-0547">Nucleotide-binding</keyword>
<keyword id="KW-0648">Protein biosynthesis</keyword>
<proteinExistence type="inferred from homology"/>
<name>SYGA_MORCA</name>
<evidence type="ECO:0000250" key="1"/>
<evidence type="ECO:0000305" key="2"/>
<accession>P77892</accession>
<gene>
    <name type="primary">glyQ</name>
</gene>
<comment type="catalytic activity">
    <reaction>
        <text>tRNA(Gly) + glycine + ATP = glycyl-tRNA(Gly) + AMP + diphosphate</text>
        <dbReference type="Rhea" id="RHEA:16013"/>
        <dbReference type="Rhea" id="RHEA-COMP:9664"/>
        <dbReference type="Rhea" id="RHEA-COMP:9683"/>
        <dbReference type="ChEBI" id="CHEBI:30616"/>
        <dbReference type="ChEBI" id="CHEBI:33019"/>
        <dbReference type="ChEBI" id="CHEBI:57305"/>
        <dbReference type="ChEBI" id="CHEBI:78442"/>
        <dbReference type="ChEBI" id="CHEBI:78522"/>
        <dbReference type="ChEBI" id="CHEBI:456215"/>
        <dbReference type="EC" id="6.1.1.14"/>
    </reaction>
</comment>
<comment type="subunit">
    <text evidence="1">Tetramer of two alpha and two beta subunits.</text>
</comment>
<comment type="subcellular location">
    <subcellularLocation>
        <location evidence="1">Cytoplasm</location>
    </subcellularLocation>
</comment>
<comment type="similarity">
    <text evidence="2">Belongs to the class-II aminoacyl-tRNA synthetase family.</text>
</comment>
<sequence length="318" mass="36235">MDSGETLTFQALILTLQNYWASRGCVVLQPYDMEVGAGTFHTATFLRALTPERWNTAYVQPSRRPTDGRYGDNPNRLQHYYQFQVVLKPNPANIQELYLGSLKAIGIDTLTHDVRFVEDNWESPTLGAWGLGWEVWLNGMEVTQFTYFQQVGGIECFPVTGEITYGLERLAMYIQGVDSVYDLVWADGEFGRVTYGDVFHQNEVEQSAYNFEHADVAKLFELFDFYEEQADKLVAVNLPLPAYEMVLKASHAFNLLDARGAISVTERQRFILRVRTLARKVAISYTEARAKLGFPLADDAHKAEALEKWLPKEPKIIL</sequence>